<evidence type="ECO:0000250" key="1">
    <source>
        <dbReference type="UniProtKB" id="Q5T440"/>
    </source>
</evidence>
<evidence type="ECO:0000255" key="2"/>
<evidence type="ECO:0000305" key="3"/>
<evidence type="ECO:0007744" key="4">
    <source>
    </source>
</evidence>
<evidence type="ECO:0007744" key="5">
    <source>
    </source>
</evidence>
<keyword id="KW-0007">Acetylation</keyword>
<keyword id="KW-0350">Heme biosynthesis</keyword>
<keyword id="KW-0496">Mitochondrion</keyword>
<keyword id="KW-1185">Reference proteome</keyword>
<keyword id="KW-0809">Transit peptide</keyword>
<gene>
    <name type="primary">Iba57</name>
</gene>
<sequence>MAAVALLRGAAVGRRSPAWHWRLSGTASHCLARGFGLLGSNPADGVAWTCFRLDGRALVRVRGPDAAPFLLGLSTNELPLSGPPTGAAQPSARAAYAHFLNVQGRTLYDVILYGLPECTEGAPSFLLECDSSVLGALQKHLSMYKIRRKVTVEPSPELHVWAVLPCVPQTSETAPLEERVEGTTMLIRDPRTARMGWRLLTQDDGPALVPRGQLGDLQDYHKYRYQQGIPEGVCDLPPGMALPLESNLVFMNGVSFTKGCYIGQELTARTHHTGVIRKRLFPVKLEGPLPASGVSPGAIVTVTATGQAAGKFRAGQGHVGLALLRSETIKGPLHIKTSESQLVAVTAVVPDWWPTAAK</sequence>
<comment type="function">
    <text evidence="1">Mitochondrial protein involved in the maturation of mitochondrial [4Fe-4S]-proteins in the late stage of the iron-sulfur cluster assembly pathway. Operates in cooperation with ISCA2 in the maturation of [4Fe-4S] proteins.</text>
</comment>
<comment type="subcellular location">
    <subcellularLocation>
        <location evidence="1">Mitochondrion</location>
    </subcellularLocation>
</comment>
<comment type="similarity">
    <text evidence="3">Belongs to the GcvT family. CAF17/IBA57 subfamily.</text>
</comment>
<protein>
    <recommendedName>
        <fullName>Iron-sulfur cluster assembly factor IBA57, mitochondrial</fullName>
    </recommendedName>
    <alternativeName>
        <fullName>Iron-sulfur cluster assembly factor homolog</fullName>
    </alternativeName>
</protein>
<proteinExistence type="evidence at protein level"/>
<feature type="transit peptide" description="Mitochondrion" evidence="2">
    <location>
        <begin position="1"/>
        <end position="94"/>
    </location>
</feature>
<feature type="chain" id="PRO_0000278634" description="Iron-sulfur cluster assembly factor IBA57, mitochondrial">
    <location>
        <begin position="95"/>
        <end position="358"/>
    </location>
</feature>
<feature type="modified residue" description="N6-acetyllysine" evidence="4">
    <location>
        <position position="222"/>
    </location>
</feature>
<feature type="modified residue" description="N6-acetyllysine; alternate" evidence="4">
    <location>
        <position position="311"/>
    </location>
</feature>
<feature type="modified residue" description="N6-succinyllysine; alternate" evidence="5">
    <location>
        <position position="311"/>
    </location>
</feature>
<feature type="sequence conflict" description="In Ref. 1; BAE43049." evidence="3" ref="1">
    <original>T</original>
    <variation>A</variation>
    <location>
        <position position="267"/>
    </location>
</feature>
<accession>Q8CAK1</accession>
<accession>Q3T9H1</accession>
<name>CAF17_MOUSE</name>
<organism>
    <name type="scientific">Mus musculus</name>
    <name type="common">Mouse</name>
    <dbReference type="NCBI Taxonomy" id="10090"/>
    <lineage>
        <taxon>Eukaryota</taxon>
        <taxon>Metazoa</taxon>
        <taxon>Chordata</taxon>
        <taxon>Craniata</taxon>
        <taxon>Vertebrata</taxon>
        <taxon>Euteleostomi</taxon>
        <taxon>Mammalia</taxon>
        <taxon>Eutheria</taxon>
        <taxon>Euarchontoglires</taxon>
        <taxon>Glires</taxon>
        <taxon>Rodentia</taxon>
        <taxon>Myomorpha</taxon>
        <taxon>Muroidea</taxon>
        <taxon>Muridae</taxon>
        <taxon>Murinae</taxon>
        <taxon>Mus</taxon>
        <taxon>Mus</taxon>
    </lineage>
</organism>
<dbReference type="EMBL" id="AK038625">
    <property type="protein sequence ID" value="BAC30069.1"/>
    <property type="molecule type" value="mRNA"/>
</dbReference>
<dbReference type="EMBL" id="AK133203">
    <property type="protein sequence ID" value="BAE21556.1"/>
    <property type="molecule type" value="mRNA"/>
</dbReference>
<dbReference type="EMBL" id="AK172525">
    <property type="protein sequence ID" value="BAE43049.1"/>
    <property type="molecule type" value="mRNA"/>
</dbReference>
<dbReference type="EMBL" id="AL645854">
    <property type="status" value="NOT_ANNOTATED_CDS"/>
    <property type="molecule type" value="Genomic_DNA"/>
</dbReference>
<dbReference type="EMBL" id="BC094909">
    <property type="protein sequence ID" value="AAH94909.1"/>
    <property type="molecule type" value="mRNA"/>
</dbReference>
<dbReference type="CCDS" id="CCDS24758.1"/>
<dbReference type="RefSeq" id="NP_776146.1">
    <property type="nucleotide sequence ID" value="NM_173785.6"/>
</dbReference>
<dbReference type="SMR" id="Q8CAK1"/>
<dbReference type="FunCoup" id="Q8CAK1">
    <property type="interactions" value="1644"/>
</dbReference>
<dbReference type="IntAct" id="Q8CAK1">
    <property type="interactions" value="1"/>
</dbReference>
<dbReference type="STRING" id="10090.ENSMUSP00000049823"/>
<dbReference type="iPTMnet" id="Q8CAK1"/>
<dbReference type="PhosphoSitePlus" id="Q8CAK1"/>
<dbReference type="SwissPalm" id="Q8CAK1"/>
<dbReference type="jPOST" id="Q8CAK1"/>
<dbReference type="PaxDb" id="10090-ENSMUSP00000049823"/>
<dbReference type="PeptideAtlas" id="Q8CAK1"/>
<dbReference type="ProteomicsDB" id="273828"/>
<dbReference type="Pumba" id="Q8CAK1"/>
<dbReference type="Antibodypedia" id="52265">
    <property type="antibodies" value="74 antibodies from 13 providers"/>
</dbReference>
<dbReference type="DNASU" id="216792"/>
<dbReference type="Ensembl" id="ENSMUST00000054523.6">
    <property type="protein sequence ID" value="ENSMUSP00000049823.6"/>
    <property type="gene ID" value="ENSMUSG00000049287.6"/>
</dbReference>
<dbReference type="GeneID" id="216792"/>
<dbReference type="KEGG" id="mmu:216792"/>
<dbReference type="UCSC" id="uc007jdd.2">
    <property type="organism name" value="mouse"/>
</dbReference>
<dbReference type="AGR" id="MGI:3041174"/>
<dbReference type="CTD" id="200205"/>
<dbReference type="MGI" id="MGI:3041174">
    <property type="gene designation" value="Iba57"/>
</dbReference>
<dbReference type="VEuPathDB" id="HostDB:ENSMUSG00000049287"/>
<dbReference type="eggNOG" id="KOG2929">
    <property type="taxonomic scope" value="Eukaryota"/>
</dbReference>
<dbReference type="GeneTree" id="ENSGT00390000006465"/>
<dbReference type="HOGENOM" id="CLU_007884_7_1_1"/>
<dbReference type="InParanoid" id="Q8CAK1"/>
<dbReference type="OMA" id="MDRLHGV"/>
<dbReference type="OrthoDB" id="191995at2759"/>
<dbReference type="PhylomeDB" id="Q8CAK1"/>
<dbReference type="TreeFam" id="TF105983"/>
<dbReference type="BioGRID-ORCS" id="216792">
    <property type="hits" value="22 hits in 78 CRISPR screens"/>
</dbReference>
<dbReference type="ChiTaRS" id="Iba57">
    <property type="organism name" value="mouse"/>
</dbReference>
<dbReference type="PRO" id="PR:Q8CAK1"/>
<dbReference type="Proteomes" id="UP000000589">
    <property type="component" value="Chromosome 11"/>
</dbReference>
<dbReference type="RNAct" id="Q8CAK1">
    <property type="molecule type" value="protein"/>
</dbReference>
<dbReference type="Bgee" id="ENSMUSG00000049287">
    <property type="expression patterns" value="Expressed in right kidney and 98 other cell types or tissues"/>
</dbReference>
<dbReference type="ExpressionAtlas" id="Q8CAK1">
    <property type="expression patterns" value="baseline and differential"/>
</dbReference>
<dbReference type="GO" id="GO:0005739">
    <property type="term" value="C:mitochondrion"/>
    <property type="evidence" value="ECO:0007005"/>
    <property type="project" value="MGI"/>
</dbReference>
<dbReference type="GO" id="GO:0016740">
    <property type="term" value="F:transferase activity"/>
    <property type="evidence" value="ECO:0007669"/>
    <property type="project" value="UniProtKB-KW"/>
</dbReference>
<dbReference type="GO" id="GO:0006783">
    <property type="term" value="P:heme biosynthetic process"/>
    <property type="evidence" value="ECO:0007669"/>
    <property type="project" value="UniProtKB-KW"/>
</dbReference>
<dbReference type="FunFam" id="3.30.1360.120:FF:000015">
    <property type="entry name" value="IBA57, iron-sulfur cluster assembly"/>
    <property type="match status" value="1"/>
</dbReference>
<dbReference type="Gene3D" id="3.30.1360.120">
    <property type="entry name" value="Probable tRNA modification gtpase trme, domain 1"/>
    <property type="match status" value="1"/>
</dbReference>
<dbReference type="InterPro" id="IPR027266">
    <property type="entry name" value="TrmE/GcvT_dom1"/>
</dbReference>
<dbReference type="InterPro" id="IPR045179">
    <property type="entry name" value="YgfZ/GcvT"/>
</dbReference>
<dbReference type="InterPro" id="IPR017703">
    <property type="entry name" value="YgfZ/GcvT_CS"/>
</dbReference>
<dbReference type="NCBIfam" id="TIGR03317">
    <property type="entry name" value="ygfZ_signature"/>
    <property type="match status" value="1"/>
</dbReference>
<dbReference type="PANTHER" id="PTHR22602">
    <property type="entry name" value="TRANSFERASE CAF17, MITOCHONDRIAL-RELATED"/>
    <property type="match status" value="1"/>
</dbReference>
<dbReference type="PANTHER" id="PTHR22602:SF0">
    <property type="entry name" value="TRANSFERASE CAF17, MITOCHONDRIAL-RELATED"/>
    <property type="match status" value="1"/>
</dbReference>
<dbReference type="Pfam" id="PF25455">
    <property type="entry name" value="Beta-barrel_CAF17_C"/>
    <property type="match status" value="1"/>
</dbReference>
<dbReference type="SUPFAM" id="SSF103025">
    <property type="entry name" value="Folate-binding domain"/>
    <property type="match status" value="1"/>
</dbReference>
<reference key="1">
    <citation type="journal article" date="2005" name="Science">
        <title>The transcriptional landscape of the mammalian genome.</title>
        <authorList>
            <person name="Carninci P."/>
            <person name="Kasukawa T."/>
            <person name="Katayama S."/>
            <person name="Gough J."/>
            <person name="Frith M.C."/>
            <person name="Maeda N."/>
            <person name="Oyama R."/>
            <person name="Ravasi T."/>
            <person name="Lenhard B."/>
            <person name="Wells C."/>
            <person name="Kodzius R."/>
            <person name="Shimokawa K."/>
            <person name="Bajic V.B."/>
            <person name="Brenner S.E."/>
            <person name="Batalov S."/>
            <person name="Forrest A.R."/>
            <person name="Zavolan M."/>
            <person name="Davis M.J."/>
            <person name="Wilming L.G."/>
            <person name="Aidinis V."/>
            <person name="Allen J.E."/>
            <person name="Ambesi-Impiombato A."/>
            <person name="Apweiler R."/>
            <person name="Aturaliya R.N."/>
            <person name="Bailey T.L."/>
            <person name="Bansal M."/>
            <person name="Baxter L."/>
            <person name="Beisel K.W."/>
            <person name="Bersano T."/>
            <person name="Bono H."/>
            <person name="Chalk A.M."/>
            <person name="Chiu K.P."/>
            <person name="Choudhary V."/>
            <person name="Christoffels A."/>
            <person name="Clutterbuck D.R."/>
            <person name="Crowe M.L."/>
            <person name="Dalla E."/>
            <person name="Dalrymple B.P."/>
            <person name="de Bono B."/>
            <person name="Della Gatta G."/>
            <person name="di Bernardo D."/>
            <person name="Down T."/>
            <person name="Engstrom P."/>
            <person name="Fagiolini M."/>
            <person name="Faulkner G."/>
            <person name="Fletcher C.F."/>
            <person name="Fukushima T."/>
            <person name="Furuno M."/>
            <person name="Futaki S."/>
            <person name="Gariboldi M."/>
            <person name="Georgii-Hemming P."/>
            <person name="Gingeras T.R."/>
            <person name="Gojobori T."/>
            <person name="Green R.E."/>
            <person name="Gustincich S."/>
            <person name="Harbers M."/>
            <person name="Hayashi Y."/>
            <person name="Hensch T.K."/>
            <person name="Hirokawa N."/>
            <person name="Hill D."/>
            <person name="Huminiecki L."/>
            <person name="Iacono M."/>
            <person name="Ikeo K."/>
            <person name="Iwama A."/>
            <person name="Ishikawa T."/>
            <person name="Jakt M."/>
            <person name="Kanapin A."/>
            <person name="Katoh M."/>
            <person name="Kawasawa Y."/>
            <person name="Kelso J."/>
            <person name="Kitamura H."/>
            <person name="Kitano H."/>
            <person name="Kollias G."/>
            <person name="Krishnan S.P."/>
            <person name="Kruger A."/>
            <person name="Kummerfeld S.K."/>
            <person name="Kurochkin I.V."/>
            <person name="Lareau L.F."/>
            <person name="Lazarevic D."/>
            <person name="Lipovich L."/>
            <person name="Liu J."/>
            <person name="Liuni S."/>
            <person name="McWilliam S."/>
            <person name="Madan Babu M."/>
            <person name="Madera M."/>
            <person name="Marchionni L."/>
            <person name="Matsuda H."/>
            <person name="Matsuzawa S."/>
            <person name="Miki H."/>
            <person name="Mignone F."/>
            <person name="Miyake S."/>
            <person name="Morris K."/>
            <person name="Mottagui-Tabar S."/>
            <person name="Mulder N."/>
            <person name="Nakano N."/>
            <person name="Nakauchi H."/>
            <person name="Ng P."/>
            <person name="Nilsson R."/>
            <person name="Nishiguchi S."/>
            <person name="Nishikawa S."/>
            <person name="Nori F."/>
            <person name="Ohara O."/>
            <person name="Okazaki Y."/>
            <person name="Orlando V."/>
            <person name="Pang K.C."/>
            <person name="Pavan W.J."/>
            <person name="Pavesi G."/>
            <person name="Pesole G."/>
            <person name="Petrovsky N."/>
            <person name="Piazza S."/>
            <person name="Reed J."/>
            <person name="Reid J.F."/>
            <person name="Ring B.Z."/>
            <person name="Ringwald M."/>
            <person name="Rost B."/>
            <person name="Ruan Y."/>
            <person name="Salzberg S.L."/>
            <person name="Sandelin A."/>
            <person name="Schneider C."/>
            <person name="Schoenbach C."/>
            <person name="Sekiguchi K."/>
            <person name="Semple C.A."/>
            <person name="Seno S."/>
            <person name="Sessa L."/>
            <person name="Sheng Y."/>
            <person name="Shibata Y."/>
            <person name="Shimada H."/>
            <person name="Shimada K."/>
            <person name="Silva D."/>
            <person name="Sinclair B."/>
            <person name="Sperling S."/>
            <person name="Stupka E."/>
            <person name="Sugiura K."/>
            <person name="Sultana R."/>
            <person name="Takenaka Y."/>
            <person name="Taki K."/>
            <person name="Tammoja K."/>
            <person name="Tan S.L."/>
            <person name="Tang S."/>
            <person name="Taylor M.S."/>
            <person name="Tegner J."/>
            <person name="Teichmann S.A."/>
            <person name="Ueda H.R."/>
            <person name="van Nimwegen E."/>
            <person name="Verardo R."/>
            <person name="Wei C.L."/>
            <person name="Yagi K."/>
            <person name="Yamanishi H."/>
            <person name="Zabarovsky E."/>
            <person name="Zhu S."/>
            <person name="Zimmer A."/>
            <person name="Hide W."/>
            <person name="Bult C."/>
            <person name="Grimmond S.M."/>
            <person name="Teasdale R.D."/>
            <person name="Liu E.T."/>
            <person name="Brusic V."/>
            <person name="Quackenbush J."/>
            <person name="Wahlestedt C."/>
            <person name="Mattick J.S."/>
            <person name="Hume D.A."/>
            <person name="Kai C."/>
            <person name="Sasaki D."/>
            <person name="Tomaru Y."/>
            <person name="Fukuda S."/>
            <person name="Kanamori-Katayama M."/>
            <person name="Suzuki M."/>
            <person name="Aoki J."/>
            <person name="Arakawa T."/>
            <person name="Iida J."/>
            <person name="Imamura K."/>
            <person name="Itoh M."/>
            <person name="Kato T."/>
            <person name="Kawaji H."/>
            <person name="Kawagashira N."/>
            <person name="Kawashima T."/>
            <person name="Kojima M."/>
            <person name="Kondo S."/>
            <person name="Konno H."/>
            <person name="Nakano K."/>
            <person name="Ninomiya N."/>
            <person name="Nishio T."/>
            <person name="Okada M."/>
            <person name="Plessy C."/>
            <person name="Shibata K."/>
            <person name="Shiraki T."/>
            <person name="Suzuki S."/>
            <person name="Tagami M."/>
            <person name="Waki K."/>
            <person name="Watahiki A."/>
            <person name="Okamura-Oho Y."/>
            <person name="Suzuki H."/>
            <person name="Kawai J."/>
            <person name="Hayashizaki Y."/>
        </authorList>
    </citation>
    <scope>NUCLEOTIDE SEQUENCE [LARGE SCALE MRNA]</scope>
    <source>
        <strain>C57BL/6J</strain>
        <strain>NOD</strain>
        <tissue>Hypothalamus</tissue>
        <tissue>Spleen</tissue>
        <tissue>Testis</tissue>
    </source>
</reference>
<reference key="2">
    <citation type="journal article" date="2009" name="PLoS Biol.">
        <title>Lineage-specific biology revealed by a finished genome assembly of the mouse.</title>
        <authorList>
            <person name="Church D.M."/>
            <person name="Goodstadt L."/>
            <person name="Hillier L.W."/>
            <person name="Zody M.C."/>
            <person name="Goldstein S."/>
            <person name="She X."/>
            <person name="Bult C.J."/>
            <person name="Agarwala R."/>
            <person name="Cherry J.L."/>
            <person name="DiCuccio M."/>
            <person name="Hlavina W."/>
            <person name="Kapustin Y."/>
            <person name="Meric P."/>
            <person name="Maglott D."/>
            <person name="Birtle Z."/>
            <person name="Marques A.C."/>
            <person name="Graves T."/>
            <person name="Zhou S."/>
            <person name="Teague B."/>
            <person name="Potamousis K."/>
            <person name="Churas C."/>
            <person name="Place M."/>
            <person name="Herschleb J."/>
            <person name="Runnheim R."/>
            <person name="Forrest D."/>
            <person name="Amos-Landgraf J."/>
            <person name="Schwartz D.C."/>
            <person name="Cheng Z."/>
            <person name="Lindblad-Toh K."/>
            <person name="Eichler E.E."/>
            <person name="Ponting C.P."/>
        </authorList>
    </citation>
    <scope>NUCLEOTIDE SEQUENCE [LARGE SCALE GENOMIC DNA]</scope>
    <source>
        <strain>C57BL/6J</strain>
    </source>
</reference>
<reference key="3">
    <citation type="journal article" date="2004" name="Genome Res.">
        <title>The status, quality, and expansion of the NIH full-length cDNA project: the Mammalian Gene Collection (MGC).</title>
        <authorList>
            <consortium name="The MGC Project Team"/>
        </authorList>
    </citation>
    <scope>NUCLEOTIDE SEQUENCE [LARGE SCALE MRNA]</scope>
    <source>
        <tissue>Pancreas</tissue>
    </source>
</reference>
<reference key="4">
    <citation type="journal article" date="2010" name="Cell">
        <title>A tissue-specific atlas of mouse protein phosphorylation and expression.</title>
        <authorList>
            <person name="Huttlin E.L."/>
            <person name="Jedrychowski M.P."/>
            <person name="Elias J.E."/>
            <person name="Goswami T."/>
            <person name="Rad R."/>
            <person name="Beausoleil S.A."/>
            <person name="Villen J."/>
            <person name="Haas W."/>
            <person name="Sowa M.E."/>
            <person name="Gygi S.P."/>
        </authorList>
    </citation>
    <scope>IDENTIFICATION BY MASS SPECTROMETRY [LARGE SCALE ANALYSIS]</scope>
    <source>
        <tissue>Brain</tissue>
        <tissue>Brown adipose tissue</tissue>
        <tissue>Heart</tissue>
        <tissue>Kidney</tissue>
        <tissue>Liver</tissue>
        <tissue>Spleen</tissue>
        <tissue>Testis</tissue>
    </source>
</reference>
<reference key="5">
    <citation type="journal article" date="2013" name="Mol. Cell">
        <title>SIRT5-mediated lysine desuccinylation impacts diverse metabolic pathways.</title>
        <authorList>
            <person name="Park J."/>
            <person name="Chen Y."/>
            <person name="Tishkoff D.X."/>
            <person name="Peng C."/>
            <person name="Tan M."/>
            <person name="Dai L."/>
            <person name="Xie Z."/>
            <person name="Zhang Y."/>
            <person name="Zwaans B.M."/>
            <person name="Skinner M.E."/>
            <person name="Lombard D.B."/>
            <person name="Zhao Y."/>
        </authorList>
    </citation>
    <scope>SUCCINYLATION [LARGE SCALE ANALYSIS] AT LYS-311</scope>
    <scope>IDENTIFICATION BY MASS SPECTROMETRY [LARGE SCALE ANALYSIS]</scope>
    <source>
        <tissue>Liver</tissue>
    </source>
</reference>
<reference key="6">
    <citation type="journal article" date="2013" name="Proc. Natl. Acad. Sci. U.S.A.">
        <title>Label-free quantitative proteomics of the lysine acetylome in mitochondria identifies substrates of SIRT3 in metabolic pathways.</title>
        <authorList>
            <person name="Rardin M.J."/>
            <person name="Newman J.C."/>
            <person name="Held J.M."/>
            <person name="Cusack M.P."/>
            <person name="Sorensen D.J."/>
            <person name="Li B."/>
            <person name="Schilling B."/>
            <person name="Mooney S.D."/>
            <person name="Kahn C.R."/>
            <person name="Verdin E."/>
            <person name="Gibson B.W."/>
        </authorList>
    </citation>
    <scope>ACETYLATION [LARGE SCALE ANALYSIS] AT LYS-222 AND LYS-311</scope>
    <scope>IDENTIFICATION BY MASS SPECTROMETRY [LARGE SCALE ANALYSIS]</scope>
    <source>
        <tissue>Liver</tissue>
    </source>
</reference>